<accession>Q5HGM2</accession>
<gene>
    <name evidence="1" type="primary">rpoZ</name>
    <name type="ordered locus">SACOL1222</name>
</gene>
<reference key="1">
    <citation type="journal article" date="2005" name="J. Bacteriol.">
        <title>Insights on evolution of virulence and resistance from the complete genome analysis of an early methicillin-resistant Staphylococcus aureus strain and a biofilm-producing methicillin-resistant Staphylococcus epidermidis strain.</title>
        <authorList>
            <person name="Gill S.R."/>
            <person name="Fouts D.E."/>
            <person name="Archer G.L."/>
            <person name="Mongodin E.F."/>
            <person name="DeBoy R.T."/>
            <person name="Ravel J."/>
            <person name="Paulsen I.T."/>
            <person name="Kolonay J.F."/>
            <person name="Brinkac L.M."/>
            <person name="Beanan M.J."/>
            <person name="Dodson R.J."/>
            <person name="Daugherty S.C."/>
            <person name="Madupu R."/>
            <person name="Angiuoli S.V."/>
            <person name="Durkin A.S."/>
            <person name="Haft D.H."/>
            <person name="Vamathevan J.J."/>
            <person name="Khouri H."/>
            <person name="Utterback T.R."/>
            <person name="Lee C."/>
            <person name="Dimitrov G."/>
            <person name="Jiang L."/>
            <person name="Qin H."/>
            <person name="Weidman J."/>
            <person name="Tran K."/>
            <person name="Kang K.H."/>
            <person name="Hance I.R."/>
            <person name="Nelson K.E."/>
            <person name="Fraser C.M."/>
        </authorList>
    </citation>
    <scope>NUCLEOTIDE SEQUENCE [LARGE SCALE GENOMIC DNA]</scope>
    <source>
        <strain>COL</strain>
    </source>
</reference>
<name>RPOZ_STAAC</name>
<organism>
    <name type="scientific">Staphylococcus aureus (strain COL)</name>
    <dbReference type="NCBI Taxonomy" id="93062"/>
    <lineage>
        <taxon>Bacteria</taxon>
        <taxon>Bacillati</taxon>
        <taxon>Bacillota</taxon>
        <taxon>Bacilli</taxon>
        <taxon>Bacillales</taxon>
        <taxon>Staphylococcaceae</taxon>
        <taxon>Staphylococcus</taxon>
    </lineage>
</organism>
<feature type="chain" id="PRO_0000128977" description="DNA-directed RNA polymerase subunit omega">
    <location>
        <begin position="1"/>
        <end position="72"/>
    </location>
</feature>
<keyword id="KW-0240">DNA-directed RNA polymerase</keyword>
<keyword id="KW-0548">Nucleotidyltransferase</keyword>
<keyword id="KW-0804">Transcription</keyword>
<keyword id="KW-0808">Transferase</keyword>
<proteinExistence type="inferred from homology"/>
<dbReference type="EC" id="2.7.7.6" evidence="1"/>
<dbReference type="EMBL" id="CP000046">
    <property type="protein sequence ID" value="AAW38059.1"/>
    <property type="molecule type" value="Genomic_DNA"/>
</dbReference>
<dbReference type="RefSeq" id="WP_000933956.1">
    <property type="nucleotide sequence ID" value="NZ_JBGOFO010000002.1"/>
</dbReference>
<dbReference type="SMR" id="Q5HGM2"/>
<dbReference type="KEGG" id="sac:SACOL1222"/>
<dbReference type="HOGENOM" id="CLU_125406_6_0_9"/>
<dbReference type="Proteomes" id="UP000000530">
    <property type="component" value="Chromosome"/>
</dbReference>
<dbReference type="GO" id="GO:0000428">
    <property type="term" value="C:DNA-directed RNA polymerase complex"/>
    <property type="evidence" value="ECO:0007669"/>
    <property type="project" value="UniProtKB-KW"/>
</dbReference>
<dbReference type="GO" id="GO:0003677">
    <property type="term" value="F:DNA binding"/>
    <property type="evidence" value="ECO:0007669"/>
    <property type="project" value="UniProtKB-UniRule"/>
</dbReference>
<dbReference type="GO" id="GO:0003899">
    <property type="term" value="F:DNA-directed RNA polymerase activity"/>
    <property type="evidence" value="ECO:0007669"/>
    <property type="project" value="UniProtKB-UniRule"/>
</dbReference>
<dbReference type="GO" id="GO:0006351">
    <property type="term" value="P:DNA-templated transcription"/>
    <property type="evidence" value="ECO:0007669"/>
    <property type="project" value="UniProtKB-UniRule"/>
</dbReference>
<dbReference type="Gene3D" id="3.90.940.10">
    <property type="match status" value="1"/>
</dbReference>
<dbReference type="HAMAP" id="MF_00366">
    <property type="entry name" value="RNApol_bact_RpoZ"/>
    <property type="match status" value="1"/>
</dbReference>
<dbReference type="InterPro" id="IPR003716">
    <property type="entry name" value="DNA-dir_RNA_pol_omega"/>
</dbReference>
<dbReference type="InterPro" id="IPR006110">
    <property type="entry name" value="Pol_omega/Rpo6/RPB6"/>
</dbReference>
<dbReference type="InterPro" id="IPR036161">
    <property type="entry name" value="RPB6/omega-like_sf"/>
</dbReference>
<dbReference type="NCBIfam" id="TIGR00690">
    <property type="entry name" value="rpoZ"/>
    <property type="match status" value="1"/>
</dbReference>
<dbReference type="PANTHER" id="PTHR34476">
    <property type="entry name" value="DNA-DIRECTED RNA POLYMERASE SUBUNIT OMEGA"/>
    <property type="match status" value="1"/>
</dbReference>
<dbReference type="PANTHER" id="PTHR34476:SF1">
    <property type="entry name" value="DNA-DIRECTED RNA POLYMERASE SUBUNIT OMEGA"/>
    <property type="match status" value="1"/>
</dbReference>
<dbReference type="Pfam" id="PF01192">
    <property type="entry name" value="RNA_pol_Rpb6"/>
    <property type="match status" value="1"/>
</dbReference>
<dbReference type="SMART" id="SM01409">
    <property type="entry name" value="RNA_pol_Rpb6"/>
    <property type="match status" value="1"/>
</dbReference>
<dbReference type="SUPFAM" id="SSF63562">
    <property type="entry name" value="RPB6/omega subunit-like"/>
    <property type="match status" value="1"/>
</dbReference>
<protein>
    <recommendedName>
        <fullName evidence="1">DNA-directed RNA polymerase subunit omega</fullName>
        <shortName evidence="1">RNAP omega subunit</shortName>
        <ecNumber evidence="1">2.7.7.6</ecNumber>
    </recommendedName>
    <alternativeName>
        <fullName evidence="1">RNA polymerase omega subunit</fullName>
    </alternativeName>
    <alternativeName>
        <fullName evidence="1">Transcriptase subunit omega</fullName>
    </alternativeName>
</protein>
<evidence type="ECO:0000255" key="1">
    <source>
        <dbReference type="HAMAP-Rule" id="MF_00366"/>
    </source>
</evidence>
<sequence length="72" mass="8150">MLNPPLNQLTSQIKSKYLIATTAAKRAREIDEQPETELLSEYHSFKPVGRALEEIADGKIRPVISSDYYGKE</sequence>
<comment type="function">
    <text evidence="1">Promotes RNA polymerase assembly. Latches the N- and C-terminal regions of the beta' subunit thereby facilitating its interaction with the beta and alpha subunits.</text>
</comment>
<comment type="catalytic activity">
    <reaction evidence="1">
        <text>RNA(n) + a ribonucleoside 5'-triphosphate = RNA(n+1) + diphosphate</text>
        <dbReference type="Rhea" id="RHEA:21248"/>
        <dbReference type="Rhea" id="RHEA-COMP:14527"/>
        <dbReference type="Rhea" id="RHEA-COMP:17342"/>
        <dbReference type="ChEBI" id="CHEBI:33019"/>
        <dbReference type="ChEBI" id="CHEBI:61557"/>
        <dbReference type="ChEBI" id="CHEBI:140395"/>
        <dbReference type="EC" id="2.7.7.6"/>
    </reaction>
</comment>
<comment type="subunit">
    <text evidence="1">The RNAP catalytic core consists of 2 alpha, 1 beta, 1 beta' and 1 omega subunit. When a sigma factor is associated with the core the holoenzyme is formed, which can initiate transcription.</text>
</comment>
<comment type="similarity">
    <text evidence="1">Belongs to the RNA polymerase subunit omega family.</text>
</comment>